<organism>
    <name type="scientific">Vibrio vulnificus (strain YJ016)</name>
    <dbReference type="NCBI Taxonomy" id="196600"/>
    <lineage>
        <taxon>Bacteria</taxon>
        <taxon>Pseudomonadati</taxon>
        <taxon>Pseudomonadota</taxon>
        <taxon>Gammaproteobacteria</taxon>
        <taxon>Vibrionales</taxon>
        <taxon>Vibrionaceae</taxon>
        <taxon>Vibrio</taxon>
    </lineage>
</organism>
<name>ACP_VIBVY</name>
<keyword id="KW-0963">Cytoplasm</keyword>
<keyword id="KW-0275">Fatty acid biosynthesis</keyword>
<keyword id="KW-0276">Fatty acid metabolism</keyword>
<keyword id="KW-0444">Lipid biosynthesis</keyword>
<keyword id="KW-0443">Lipid metabolism</keyword>
<keyword id="KW-0596">Phosphopantetheine</keyword>
<keyword id="KW-0597">Phosphoprotein</keyword>
<protein>
    <recommendedName>
        <fullName evidence="1">Acyl carrier protein</fullName>
        <shortName evidence="1">ACP</shortName>
    </recommendedName>
</protein>
<evidence type="ECO:0000255" key="1">
    <source>
        <dbReference type="HAMAP-Rule" id="MF_01217"/>
    </source>
</evidence>
<evidence type="ECO:0000255" key="2">
    <source>
        <dbReference type="PROSITE-ProRule" id="PRU00258"/>
    </source>
</evidence>
<dbReference type="EMBL" id="BA000037">
    <property type="protein sequence ID" value="BAC94040.1"/>
    <property type="molecule type" value="Genomic_DNA"/>
</dbReference>
<dbReference type="RefSeq" id="WP_011080818.1">
    <property type="nucleotide sequence ID" value="NC_005139.1"/>
</dbReference>
<dbReference type="SMR" id="Q7MLZ9"/>
<dbReference type="STRING" id="672.VV93_v1c11930"/>
<dbReference type="GeneID" id="93894218"/>
<dbReference type="KEGG" id="vvy:VV1276"/>
<dbReference type="eggNOG" id="COG0236">
    <property type="taxonomic scope" value="Bacteria"/>
</dbReference>
<dbReference type="HOGENOM" id="CLU_108696_5_1_6"/>
<dbReference type="UniPathway" id="UPA00094"/>
<dbReference type="Proteomes" id="UP000002675">
    <property type="component" value="Chromosome I"/>
</dbReference>
<dbReference type="GO" id="GO:0005829">
    <property type="term" value="C:cytosol"/>
    <property type="evidence" value="ECO:0007669"/>
    <property type="project" value="TreeGrafter"/>
</dbReference>
<dbReference type="GO" id="GO:0016020">
    <property type="term" value="C:membrane"/>
    <property type="evidence" value="ECO:0007669"/>
    <property type="project" value="GOC"/>
</dbReference>
<dbReference type="GO" id="GO:0000035">
    <property type="term" value="F:acyl binding"/>
    <property type="evidence" value="ECO:0007669"/>
    <property type="project" value="TreeGrafter"/>
</dbReference>
<dbReference type="GO" id="GO:0000036">
    <property type="term" value="F:acyl carrier activity"/>
    <property type="evidence" value="ECO:0007669"/>
    <property type="project" value="UniProtKB-UniRule"/>
</dbReference>
<dbReference type="GO" id="GO:0009245">
    <property type="term" value="P:lipid A biosynthetic process"/>
    <property type="evidence" value="ECO:0007669"/>
    <property type="project" value="TreeGrafter"/>
</dbReference>
<dbReference type="FunFam" id="1.10.1200.10:FF:000001">
    <property type="entry name" value="Acyl carrier protein"/>
    <property type="match status" value="1"/>
</dbReference>
<dbReference type="Gene3D" id="1.10.1200.10">
    <property type="entry name" value="ACP-like"/>
    <property type="match status" value="1"/>
</dbReference>
<dbReference type="HAMAP" id="MF_01217">
    <property type="entry name" value="Acyl_carrier"/>
    <property type="match status" value="1"/>
</dbReference>
<dbReference type="InterPro" id="IPR003231">
    <property type="entry name" value="ACP"/>
</dbReference>
<dbReference type="InterPro" id="IPR036736">
    <property type="entry name" value="ACP-like_sf"/>
</dbReference>
<dbReference type="InterPro" id="IPR009081">
    <property type="entry name" value="PP-bd_ACP"/>
</dbReference>
<dbReference type="InterPro" id="IPR006162">
    <property type="entry name" value="Ppantetheine_attach_site"/>
</dbReference>
<dbReference type="NCBIfam" id="TIGR00517">
    <property type="entry name" value="acyl_carrier"/>
    <property type="match status" value="1"/>
</dbReference>
<dbReference type="NCBIfam" id="NF002148">
    <property type="entry name" value="PRK00982.1-2"/>
    <property type="match status" value="1"/>
</dbReference>
<dbReference type="NCBIfam" id="NF002149">
    <property type="entry name" value="PRK00982.1-3"/>
    <property type="match status" value="1"/>
</dbReference>
<dbReference type="NCBIfam" id="NF002150">
    <property type="entry name" value="PRK00982.1-4"/>
    <property type="match status" value="1"/>
</dbReference>
<dbReference type="NCBIfam" id="NF002151">
    <property type="entry name" value="PRK00982.1-5"/>
    <property type="match status" value="1"/>
</dbReference>
<dbReference type="PANTHER" id="PTHR20863">
    <property type="entry name" value="ACYL CARRIER PROTEIN"/>
    <property type="match status" value="1"/>
</dbReference>
<dbReference type="PANTHER" id="PTHR20863:SF76">
    <property type="entry name" value="CARRIER DOMAIN-CONTAINING PROTEIN"/>
    <property type="match status" value="1"/>
</dbReference>
<dbReference type="Pfam" id="PF00550">
    <property type="entry name" value="PP-binding"/>
    <property type="match status" value="1"/>
</dbReference>
<dbReference type="SUPFAM" id="SSF47336">
    <property type="entry name" value="ACP-like"/>
    <property type="match status" value="1"/>
</dbReference>
<dbReference type="PROSITE" id="PS50075">
    <property type="entry name" value="CARRIER"/>
    <property type="match status" value="1"/>
</dbReference>
<dbReference type="PROSITE" id="PS00012">
    <property type="entry name" value="PHOSPHOPANTETHEINE"/>
    <property type="match status" value="1"/>
</dbReference>
<sequence length="78" mass="8632">MSNLEERVKKIIVEQLGVDESEVKNEASFVDDLGADSLDTVELVMALEEEFDTEIPDEEAEKITTVQAAIDYVTANAQ</sequence>
<accession>Q7MLZ9</accession>
<feature type="chain" id="PRO_0000180218" description="Acyl carrier protein">
    <location>
        <begin position="1"/>
        <end position="78"/>
    </location>
</feature>
<feature type="domain" description="Carrier" evidence="2">
    <location>
        <begin position="2"/>
        <end position="77"/>
    </location>
</feature>
<feature type="modified residue" description="O-(pantetheine 4'-phosphoryl)serine" evidence="2">
    <location>
        <position position="37"/>
    </location>
</feature>
<gene>
    <name evidence="1" type="primary">acpP</name>
    <name type="ordered locus">VV1276</name>
</gene>
<proteinExistence type="inferred from homology"/>
<comment type="function">
    <text evidence="1">Carrier of the growing fatty acid chain in fatty acid biosynthesis.</text>
</comment>
<comment type="pathway">
    <text evidence="1">Lipid metabolism; fatty acid biosynthesis.</text>
</comment>
<comment type="subcellular location">
    <subcellularLocation>
        <location evidence="1">Cytoplasm</location>
    </subcellularLocation>
</comment>
<comment type="PTM">
    <text evidence="1">4'-phosphopantetheine is transferred from CoA to a specific serine of apo-ACP by AcpS. This modification is essential for activity because fatty acids are bound in thioester linkage to the sulfhydryl of the prosthetic group.</text>
</comment>
<comment type="similarity">
    <text evidence="1">Belongs to the acyl carrier protein (ACP) family.</text>
</comment>
<reference key="1">
    <citation type="journal article" date="2003" name="Genome Res.">
        <title>Comparative genome analysis of Vibrio vulnificus, a marine pathogen.</title>
        <authorList>
            <person name="Chen C.-Y."/>
            <person name="Wu K.-M."/>
            <person name="Chang Y.-C."/>
            <person name="Chang C.-H."/>
            <person name="Tsai H.-C."/>
            <person name="Liao T.-L."/>
            <person name="Liu Y.-M."/>
            <person name="Chen H.-J."/>
            <person name="Shen A.B.-T."/>
            <person name="Li J.-C."/>
            <person name="Su T.-L."/>
            <person name="Shao C.-P."/>
            <person name="Lee C.-T."/>
            <person name="Hor L.-I."/>
            <person name="Tsai S.-F."/>
        </authorList>
    </citation>
    <scope>NUCLEOTIDE SEQUENCE [LARGE SCALE GENOMIC DNA]</scope>
    <source>
        <strain>YJ016</strain>
    </source>
</reference>